<name>PA2A_BOTLC</name>
<sequence>SLWQFGKMINYVMGESGVLQYLSYGCYCGLGGQGQPTDATDRCCFVHDCCYGKVTGCDPK</sequence>
<accession>P0DJ62</accession>
<dbReference type="EC" id="3.1.1.4"/>
<dbReference type="SMR" id="P0DJ62"/>
<dbReference type="GO" id="GO:0005576">
    <property type="term" value="C:extracellular region"/>
    <property type="evidence" value="ECO:0007669"/>
    <property type="project" value="UniProtKB-SubCell"/>
</dbReference>
<dbReference type="GO" id="GO:0005509">
    <property type="term" value="F:calcium ion binding"/>
    <property type="evidence" value="ECO:0007669"/>
    <property type="project" value="InterPro"/>
</dbReference>
<dbReference type="GO" id="GO:0047498">
    <property type="term" value="F:calcium-dependent phospholipase A2 activity"/>
    <property type="evidence" value="ECO:0007669"/>
    <property type="project" value="TreeGrafter"/>
</dbReference>
<dbReference type="GO" id="GO:0005543">
    <property type="term" value="F:phospholipid binding"/>
    <property type="evidence" value="ECO:0007669"/>
    <property type="project" value="TreeGrafter"/>
</dbReference>
<dbReference type="GO" id="GO:0090729">
    <property type="term" value="F:toxin activity"/>
    <property type="evidence" value="ECO:0007669"/>
    <property type="project" value="UniProtKB-KW"/>
</dbReference>
<dbReference type="GO" id="GO:0050482">
    <property type="term" value="P:arachidonate secretion"/>
    <property type="evidence" value="ECO:0007669"/>
    <property type="project" value="InterPro"/>
</dbReference>
<dbReference type="GO" id="GO:0031640">
    <property type="term" value="P:killing of cells of another organism"/>
    <property type="evidence" value="ECO:0007669"/>
    <property type="project" value="UniProtKB-KW"/>
</dbReference>
<dbReference type="GO" id="GO:0016042">
    <property type="term" value="P:lipid catabolic process"/>
    <property type="evidence" value="ECO:0007669"/>
    <property type="project" value="UniProtKB-KW"/>
</dbReference>
<dbReference type="GO" id="GO:0006644">
    <property type="term" value="P:phospholipid metabolic process"/>
    <property type="evidence" value="ECO:0007669"/>
    <property type="project" value="InterPro"/>
</dbReference>
<dbReference type="CDD" id="cd00125">
    <property type="entry name" value="PLA2c"/>
    <property type="match status" value="1"/>
</dbReference>
<dbReference type="Gene3D" id="1.20.90.10">
    <property type="entry name" value="Phospholipase A2 domain"/>
    <property type="match status" value="1"/>
</dbReference>
<dbReference type="InterPro" id="IPR001211">
    <property type="entry name" value="PLipase_A2"/>
</dbReference>
<dbReference type="InterPro" id="IPR016090">
    <property type="entry name" value="PLipase_A2_dom"/>
</dbReference>
<dbReference type="InterPro" id="IPR036444">
    <property type="entry name" value="PLipase_A2_dom_sf"/>
</dbReference>
<dbReference type="InterPro" id="IPR033113">
    <property type="entry name" value="PLipase_A2_His_AS"/>
</dbReference>
<dbReference type="PANTHER" id="PTHR11716:SF101">
    <property type="entry name" value="BASIC PHOSPHOLIPASE A2 PA-11-LIKE"/>
    <property type="match status" value="1"/>
</dbReference>
<dbReference type="PANTHER" id="PTHR11716">
    <property type="entry name" value="PHOSPHOLIPASE A2 FAMILY MEMBER"/>
    <property type="match status" value="1"/>
</dbReference>
<dbReference type="Pfam" id="PF00068">
    <property type="entry name" value="Phospholip_A2_1"/>
    <property type="match status" value="1"/>
</dbReference>
<dbReference type="PRINTS" id="PR00389">
    <property type="entry name" value="PHPHLIPASEA2"/>
</dbReference>
<dbReference type="SMART" id="SM00085">
    <property type="entry name" value="PA2c"/>
    <property type="match status" value="1"/>
</dbReference>
<dbReference type="SUPFAM" id="SSF48619">
    <property type="entry name" value="Phospholipase A2, PLA2"/>
    <property type="match status" value="1"/>
</dbReference>
<dbReference type="PROSITE" id="PS00118">
    <property type="entry name" value="PA2_HIS"/>
    <property type="match status" value="1"/>
</dbReference>
<reference key="1">
    <citation type="journal article" date="2011" name="Comp. Biochem. Physiol.">
        <title>Isolation and functional characterization of proinflammatory acidic phospholipase A2 from Bothrops leucurus snake venom.</title>
        <authorList>
            <person name="Nunes D.C."/>
            <person name="Rodrigues R.S."/>
            <person name="Lucena M.N."/>
            <person name="Cologna C.T."/>
            <person name="Oliveira A.C."/>
            <person name="Hamaguchi A."/>
            <person name="Homsi-Brandeburgo M.I."/>
            <person name="Arantes E.C."/>
            <person name="Teixeira D.N."/>
            <person name="Ueira-Vieira C."/>
            <person name="Rodrigues V.M."/>
        </authorList>
    </citation>
    <scope>PROTEIN SEQUENCE</scope>
    <scope>FUNCTION</scope>
    <scope>CATALYTIC ACTIVITY</scope>
    <scope>SUBUNIT</scope>
    <scope>SUBCELLULAR LOCATION</scope>
    <scope>TISSUE SPECIFICITY</scope>
    <source>
        <tissue>Venom</tissue>
    </source>
</reference>
<proteinExistence type="evidence at protein level"/>
<protein>
    <recommendedName>
        <fullName>Acidic phospholipase A2</fullName>
        <shortName>svPLA2</shortName>
        <ecNumber>3.1.1.4</ecNumber>
    </recommendedName>
    <alternativeName>
        <fullName>Bl-PLA2</fullName>
    </alternativeName>
    <alternativeName>
        <fullName>Phosphatidylcholine 2-acylhydrolase 1B</fullName>
    </alternativeName>
</protein>
<feature type="chain" id="PRO_0000413803" description="Acidic phospholipase A2">
    <location>
        <begin position="1"/>
        <end position="60" status="greater than"/>
    </location>
</feature>
<feature type="active site" evidence="2 3">
    <location>
        <position position="47"/>
    </location>
</feature>
<feature type="binding site" evidence="1">
    <location>
        <position position="27"/>
    </location>
    <ligand>
        <name>Ca(2+)</name>
        <dbReference type="ChEBI" id="CHEBI:29108"/>
    </ligand>
</feature>
<feature type="binding site" evidence="1">
    <location>
        <position position="29"/>
    </location>
    <ligand>
        <name>Ca(2+)</name>
        <dbReference type="ChEBI" id="CHEBI:29108"/>
    </ligand>
</feature>
<feature type="binding site" evidence="1">
    <location>
        <position position="31"/>
    </location>
    <ligand>
        <name>Ca(2+)</name>
        <dbReference type="ChEBI" id="CHEBI:29108"/>
    </ligand>
</feature>
<feature type="binding site" evidence="1">
    <location>
        <position position="48"/>
    </location>
    <ligand>
        <name>Ca(2+)</name>
        <dbReference type="ChEBI" id="CHEBI:29108"/>
    </ligand>
</feature>
<feature type="disulfide bond" evidence="1">
    <location>
        <begin position="26"/>
        <end status="unknown"/>
    </location>
</feature>
<feature type="disulfide bond" evidence="1">
    <location>
        <begin position="28"/>
        <end position="44"/>
    </location>
</feature>
<feature type="disulfide bond" evidence="1">
    <location>
        <begin position="43"/>
        <end status="unknown"/>
    </location>
</feature>
<feature type="disulfide bond" evidence="1">
    <location>
        <begin position="49"/>
        <end status="unknown"/>
    </location>
</feature>
<feature type="disulfide bond" evidence="1">
    <location>
        <begin position="50"/>
        <end status="unknown"/>
    </location>
</feature>
<feature type="disulfide bond" evidence="1">
    <location>
        <begin position="57"/>
        <end status="unknown"/>
    </location>
</feature>
<feature type="non-terminal residue">
    <location>
        <position position="60"/>
    </location>
</feature>
<evidence type="ECO:0000250" key="1"/>
<evidence type="ECO:0000255" key="2">
    <source>
        <dbReference type="PROSITE-ProRule" id="PRU10035"/>
    </source>
</evidence>
<evidence type="ECO:0000255" key="3">
    <source>
        <dbReference type="PROSITE-ProRule" id="PRU10036"/>
    </source>
</evidence>
<evidence type="ECO:0000269" key="4">
    <source>
    </source>
</evidence>
<evidence type="ECO:0000305" key="5"/>
<comment type="function">
    <text evidence="4">Snake venom phospholipase A2 (PLA2) that exhibits an indirect hemolytic activity, a low myotoxicity, and induces edema. In addition, this enzyme has been shown to induce the release of some pro- and anti-inflammatory cytokines from human PBMC (IL12B, TNF-alpha, IL1B and IL6 but not variation has been observed for IL-8 and IL-10). PLA2 catalyzes the calcium-dependent hydrolysis of the 2-acyl groups in 3-sn-phosphoglycerides.</text>
</comment>
<comment type="catalytic activity">
    <reaction evidence="2 3 4">
        <text>a 1,2-diacyl-sn-glycero-3-phosphocholine + H2O = a 1-acyl-sn-glycero-3-phosphocholine + a fatty acid + H(+)</text>
        <dbReference type="Rhea" id="RHEA:15801"/>
        <dbReference type="ChEBI" id="CHEBI:15377"/>
        <dbReference type="ChEBI" id="CHEBI:15378"/>
        <dbReference type="ChEBI" id="CHEBI:28868"/>
        <dbReference type="ChEBI" id="CHEBI:57643"/>
        <dbReference type="ChEBI" id="CHEBI:58168"/>
        <dbReference type="EC" id="3.1.1.4"/>
    </reaction>
</comment>
<comment type="cofactor">
    <cofactor evidence="1">
        <name>Ca(2+)</name>
        <dbReference type="ChEBI" id="CHEBI:29108"/>
    </cofactor>
    <text evidence="1">Binds 1 Ca(2+) ion.</text>
</comment>
<comment type="subunit">
    <text evidence="4">Monomer.</text>
</comment>
<comment type="subcellular location">
    <subcellularLocation>
        <location evidence="4">Secreted</location>
    </subcellularLocation>
</comment>
<comment type="tissue specificity">
    <text evidence="4">Expressed by the venom gland.</text>
</comment>
<comment type="similarity">
    <text evidence="5">Belongs to the phospholipase A2 family. Group II subfamily. D49 sub-subfamily.</text>
</comment>
<keyword id="KW-0106">Calcium</keyword>
<keyword id="KW-0204">Cytolysis</keyword>
<keyword id="KW-0903">Direct protein sequencing</keyword>
<keyword id="KW-1015">Disulfide bond</keyword>
<keyword id="KW-0354">Hemolysis</keyword>
<keyword id="KW-0378">Hydrolase</keyword>
<keyword id="KW-0442">Lipid degradation</keyword>
<keyword id="KW-0443">Lipid metabolism</keyword>
<keyword id="KW-0479">Metal-binding</keyword>
<keyword id="KW-0959">Myotoxin</keyword>
<keyword id="KW-0964">Secreted</keyword>
<keyword id="KW-0800">Toxin</keyword>
<organism>
    <name type="scientific">Bothrops leucurus</name>
    <name type="common">Whitetail lancehead</name>
    <dbReference type="NCBI Taxonomy" id="157295"/>
    <lineage>
        <taxon>Eukaryota</taxon>
        <taxon>Metazoa</taxon>
        <taxon>Chordata</taxon>
        <taxon>Craniata</taxon>
        <taxon>Vertebrata</taxon>
        <taxon>Euteleostomi</taxon>
        <taxon>Lepidosauria</taxon>
        <taxon>Squamata</taxon>
        <taxon>Bifurcata</taxon>
        <taxon>Unidentata</taxon>
        <taxon>Episquamata</taxon>
        <taxon>Toxicofera</taxon>
        <taxon>Serpentes</taxon>
        <taxon>Colubroidea</taxon>
        <taxon>Viperidae</taxon>
        <taxon>Crotalinae</taxon>
        <taxon>Bothrops</taxon>
    </lineage>
</organism>